<name>ETT1_YEAS6</name>
<accession>B5VRU9</accession>
<reference key="1">
    <citation type="journal article" date="2008" name="FEMS Yeast Res.">
        <title>Comparative genome analysis of a Saccharomyces cerevisiae wine strain.</title>
        <authorList>
            <person name="Borneman A.R."/>
            <person name="Forgan A.H."/>
            <person name="Pretorius I.S."/>
            <person name="Chambers P.J."/>
        </authorList>
    </citation>
    <scope>NUCLEOTIDE SEQUENCE [LARGE SCALE GENOMIC DNA]</scope>
    <source>
        <strain>AWRI1631</strain>
    </source>
</reference>
<sequence>MAKRPLGLGKQSREKKRKVESVEKKSDEPSRESTPVRSQMSVELDDDADLDDELAQLKGLWSKYFHSDRDDEYVLNGIVHECDRLLRLSEEDKEIKKTLNDIFHGIYALALSELTIFKAGDEEATEEKRKKDVSSFFENAIERVELGLSHFPESQFLKLVLAKIIFQRIPLEYISNLHLKSKDKKLDLVGQLEHGKKHFSIYENDTEFTFEILQMVNDLLDIVENFGREQSIQEGIDSDNEEEEELIDIELEPEHPVYPLQQSLEANYEWLRNHFDKLLDNTNTDMKIYASIANTLGELYLKKAEEPSKVFLSLQYDDGSSKKVSDKEAKNVQETALKHTKKALEYLEKAKLEDDPDTWVQVAEAYIDLGNLLDNESAEQEEAYKTAEEILGKANKASHGKFQDVLDNFLQG</sequence>
<evidence type="ECO:0000250" key="1"/>
<evidence type="ECO:0000250" key="2">
    <source>
        <dbReference type="UniProtKB" id="Q08421"/>
    </source>
</evidence>
<evidence type="ECO:0000256" key="3">
    <source>
        <dbReference type="SAM" id="MobiDB-lite"/>
    </source>
</evidence>
<evidence type="ECO:0000305" key="4"/>
<feature type="chain" id="PRO_0000406627" description="Enhancer of translation termination 1">
    <location>
        <begin position="1"/>
        <end position="412"/>
    </location>
</feature>
<feature type="region of interest" description="Disordered" evidence="3">
    <location>
        <begin position="1"/>
        <end position="45"/>
    </location>
</feature>
<feature type="compositionally biased region" description="Basic and acidic residues" evidence="3">
    <location>
        <begin position="17"/>
        <end position="31"/>
    </location>
</feature>
<feature type="compositionally biased region" description="Polar residues" evidence="3">
    <location>
        <begin position="32"/>
        <end position="41"/>
    </location>
</feature>
<feature type="modified residue" description="Phosphoserine" evidence="2">
    <location>
        <position position="30"/>
    </location>
</feature>
<keyword id="KW-0539">Nucleus</keyword>
<keyword id="KW-0597">Phosphoprotein</keyword>
<keyword id="KW-0804">Transcription</keyword>
<keyword id="KW-0805">Transcription regulation</keyword>
<keyword id="KW-0810">Translation regulation</keyword>
<gene>
    <name type="primary">ETT1</name>
    <name type="ORF">AWRI1631_152110</name>
</gene>
<comment type="function">
    <text evidence="1">Required for correct translation termination and probably involved in regulation of hypoxic gene expression in association TPA1. Inhibits replication of Brome mosaic virus (By similarity).</text>
</comment>
<comment type="subunit">
    <text evidence="1">Interacts with STM1.</text>
</comment>
<comment type="subcellular location">
    <subcellularLocation>
        <location evidence="1">Nucleus</location>
    </subcellularLocation>
</comment>
<comment type="similarity">
    <text evidence="4">Belongs to the ETT1 family.</text>
</comment>
<dbReference type="EMBL" id="ABSV01002138">
    <property type="protein sequence ID" value="EDZ69343.1"/>
    <property type="molecule type" value="Genomic_DNA"/>
</dbReference>
<dbReference type="SMR" id="B5VRU9"/>
<dbReference type="Proteomes" id="UP000008988">
    <property type="component" value="Unassembled WGS sequence"/>
</dbReference>
<dbReference type="GO" id="GO:0005634">
    <property type="term" value="C:nucleus"/>
    <property type="evidence" value="ECO:0007669"/>
    <property type="project" value="UniProtKB-SubCell"/>
</dbReference>
<dbReference type="GO" id="GO:2000640">
    <property type="term" value="P:positive regulation of SREBP signaling pathway"/>
    <property type="evidence" value="ECO:0007669"/>
    <property type="project" value="TreeGrafter"/>
</dbReference>
<dbReference type="GO" id="GO:0006417">
    <property type="term" value="P:regulation of translation"/>
    <property type="evidence" value="ECO:0007669"/>
    <property type="project" value="UniProtKB-KW"/>
</dbReference>
<dbReference type="Gene3D" id="1.25.40.10">
    <property type="entry name" value="Tetratricopeptide repeat domain"/>
    <property type="match status" value="1"/>
</dbReference>
<dbReference type="InterPro" id="IPR024318">
    <property type="entry name" value="Nro1/ETT1"/>
</dbReference>
<dbReference type="InterPro" id="IPR011990">
    <property type="entry name" value="TPR-like_helical_dom_sf"/>
</dbReference>
<dbReference type="PANTHER" id="PTHR28290">
    <property type="entry name" value="ENHANCER OF TRANSLATION TERMINATION 1"/>
    <property type="match status" value="1"/>
</dbReference>
<dbReference type="PANTHER" id="PTHR28290:SF1">
    <property type="entry name" value="ENHANCER OF TRANSLATION TERMINATION 1"/>
    <property type="match status" value="1"/>
</dbReference>
<dbReference type="Pfam" id="PF12753">
    <property type="entry name" value="Nro1"/>
    <property type="match status" value="1"/>
</dbReference>
<organism>
    <name type="scientific">Saccharomyces cerevisiae (strain AWRI1631)</name>
    <name type="common">Baker's yeast</name>
    <dbReference type="NCBI Taxonomy" id="545124"/>
    <lineage>
        <taxon>Eukaryota</taxon>
        <taxon>Fungi</taxon>
        <taxon>Dikarya</taxon>
        <taxon>Ascomycota</taxon>
        <taxon>Saccharomycotina</taxon>
        <taxon>Saccharomycetes</taxon>
        <taxon>Saccharomycetales</taxon>
        <taxon>Saccharomycetaceae</taxon>
        <taxon>Saccharomyces</taxon>
    </lineage>
</organism>
<proteinExistence type="inferred from homology"/>
<protein>
    <recommendedName>
        <fullName>Enhancer of translation termination 1</fullName>
    </recommendedName>
</protein>